<feature type="chain" id="PRO_0000175925" description="Probable transcriptional regulatory protein UU295">
    <location>
        <begin position="1"/>
        <end position="236"/>
    </location>
</feature>
<sequence length="236" mass="26782">MPRKHLIASGINKKQQQQAKIWMKCAKEIKAAAKMGGPNPEANSRLKVAIERALNNNLSRDSIERNINGASKDIDNLKELTYEGYGPNGLAIIVRALTDNEQRTISAIRGYFSKLQGQIAKPNSVSMLFNECGQLLINKETKSLDEWFEILIDQSIIDINEDDKIIEILVKPEDFSTVKLILEKNNADIKSAEIKLIPNDFISLDEYARERLVRFVNACENDDDISWVITNYEEEL</sequence>
<protein>
    <recommendedName>
        <fullName evidence="1">Probable transcriptional regulatory protein UU295</fullName>
    </recommendedName>
</protein>
<comment type="subcellular location">
    <subcellularLocation>
        <location evidence="1">Cytoplasm</location>
    </subcellularLocation>
</comment>
<comment type="similarity">
    <text evidence="1">Belongs to the TACO1 family.</text>
</comment>
<dbReference type="EMBL" id="AF222894">
    <property type="protein sequence ID" value="AAF30704.1"/>
    <property type="molecule type" value="Genomic_DNA"/>
</dbReference>
<dbReference type="RefSeq" id="WP_006688835.1">
    <property type="nucleotide sequence ID" value="NC_002162.1"/>
</dbReference>
<dbReference type="SMR" id="Q9PQJ6"/>
<dbReference type="STRING" id="273119.UU295"/>
<dbReference type="EnsemblBacteria" id="AAF30704">
    <property type="protein sequence ID" value="AAF30704"/>
    <property type="gene ID" value="UU295"/>
</dbReference>
<dbReference type="GeneID" id="29672584"/>
<dbReference type="KEGG" id="uur:UU295"/>
<dbReference type="eggNOG" id="COG0217">
    <property type="taxonomic scope" value="Bacteria"/>
</dbReference>
<dbReference type="HOGENOM" id="CLU_062974_2_2_14"/>
<dbReference type="OrthoDB" id="9781053at2"/>
<dbReference type="Proteomes" id="UP000000423">
    <property type="component" value="Chromosome"/>
</dbReference>
<dbReference type="GO" id="GO:0005829">
    <property type="term" value="C:cytosol"/>
    <property type="evidence" value="ECO:0007669"/>
    <property type="project" value="TreeGrafter"/>
</dbReference>
<dbReference type="GO" id="GO:0003677">
    <property type="term" value="F:DNA binding"/>
    <property type="evidence" value="ECO:0007669"/>
    <property type="project" value="UniProtKB-UniRule"/>
</dbReference>
<dbReference type="GO" id="GO:0006355">
    <property type="term" value="P:regulation of DNA-templated transcription"/>
    <property type="evidence" value="ECO:0007669"/>
    <property type="project" value="UniProtKB-UniRule"/>
</dbReference>
<dbReference type="Gene3D" id="1.10.10.200">
    <property type="match status" value="1"/>
</dbReference>
<dbReference type="Gene3D" id="3.30.70.980">
    <property type="match status" value="2"/>
</dbReference>
<dbReference type="HAMAP" id="MF_00693">
    <property type="entry name" value="Transcrip_reg_TACO1"/>
    <property type="match status" value="1"/>
</dbReference>
<dbReference type="InterPro" id="IPR017856">
    <property type="entry name" value="Integrase-like_N"/>
</dbReference>
<dbReference type="InterPro" id="IPR048300">
    <property type="entry name" value="TACO1_YebC-like_2nd/3rd_dom"/>
</dbReference>
<dbReference type="InterPro" id="IPR049083">
    <property type="entry name" value="TACO1_YebC_N"/>
</dbReference>
<dbReference type="InterPro" id="IPR002876">
    <property type="entry name" value="Transcrip_reg_TACO1-like"/>
</dbReference>
<dbReference type="InterPro" id="IPR026564">
    <property type="entry name" value="Transcrip_reg_TACO1-like_dom3"/>
</dbReference>
<dbReference type="InterPro" id="IPR029072">
    <property type="entry name" value="YebC-like"/>
</dbReference>
<dbReference type="NCBIfam" id="NF009044">
    <property type="entry name" value="PRK12378.1"/>
    <property type="match status" value="1"/>
</dbReference>
<dbReference type="NCBIfam" id="TIGR01033">
    <property type="entry name" value="YebC/PmpR family DNA-binding transcriptional regulator"/>
    <property type="match status" value="1"/>
</dbReference>
<dbReference type="PANTHER" id="PTHR12532:SF6">
    <property type="entry name" value="TRANSCRIPTIONAL REGULATORY PROTEIN YEBC-RELATED"/>
    <property type="match status" value="1"/>
</dbReference>
<dbReference type="PANTHER" id="PTHR12532">
    <property type="entry name" value="TRANSLATIONAL ACTIVATOR OF CYTOCHROME C OXIDASE 1"/>
    <property type="match status" value="1"/>
</dbReference>
<dbReference type="Pfam" id="PF20772">
    <property type="entry name" value="TACO1_YebC_N"/>
    <property type="match status" value="1"/>
</dbReference>
<dbReference type="Pfam" id="PF01709">
    <property type="entry name" value="Transcrip_reg"/>
    <property type="match status" value="1"/>
</dbReference>
<dbReference type="SUPFAM" id="SSF75625">
    <property type="entry name" value="YebC-like"/>
    <property type="match status" value="1"/>
</dbReference>
<accession>Q9PQJ6</accession>
<gene>
    <name type="ordered locus">UU295</name>
</gene>
<proteinExistence type="inferred from homology"/>
<evidence type="ECO:0000255" key="1">
    <source>
        <dbReference type="HAMAP-Rule" id="MF_00693"/>
    </source>
</evidence>
<name>Y295_UREPA</name>
<keyword id="KW-0963">Cytoplasm</keyword>
<keyword id="KW-0238">DNA-binding</keyword>
<keyword id="KW-1185">Reference proteome</keyword>
<keyword id="KW-0804">Transcription</keyword>
<keyword id="KW-0805">Transcription regulation</keyword>
<reference key="1">
    <citation type="journal article" date="2000" name="Nature">
        <title>The complete sequence of the mucosal pathogen Ureaplasma urealyticum.</title>
        <authorList>
            <person name="Glass J.I."/>
            <person name="Lefkowitz E.J."/>
            <person name="Glass J.S."/>
            <person name="Heiner C.R."/>
            <person name="Chen E.Y."/>
            <person name="Cassell G.H."/>
        </authorList>
    </citation>
    <scope>NUCLEOTIDE SEQUENCE [LARGE SCALE GENOMIC DNA]</scope>
    <source>
        <strain>ATCC 700970</strain>
    </source>
</reference>
<organism>
    <name type="scientific">Ureaplasma parvum serovar 3 (strain ATCC 700970)</name>
    <dbReference type="NCBI Taxonomy" id="273119"/>
    <lineage>
        <taxon>Bacteria</taxon>
        <taxon>Bacillati</taxon>
        <taxon>Mycoplasmatota</taxon>
        <taxon>Mycoplasmoidales</taxon>
        <taxon>Mycoplasmoidaceae</taxon>
        <taxon>Ureaplasma</taxon>
    </lineage>
</organism>